<proteinExistence type="inferred from homology"/>
<protein>
    <recommendedName>
        <fullName evidence="1">Holo-[acyl-carrier-protein] synthase</fullName>
        <shortName evidence="1">Holo-ACP synthase</shortName>
        <ecNumber evidence="1">2.7.8.7</ecNumber>
    </recommendedName>
    <alternativeName>
        <fullName evidence="1">4'-phosphopantetheinyl transferase AcpS</fullName>
    </alternativeName>
</protein>
<accession>Q07Z00</accession>
<reference key="1">
    <citation type="submission" date="2006-08" db="EMBL/GenBank/DDBJ databases">
        <title>Complete sequence of Shewanella frigidimarina NCIMB 400.</title>
        <authorList>
            <consortium name="US DOE Joint Genome Institute"/>
            <person name="Copeland A."/>
            <person name="Lucas S."/>
            <person name="Lapidus A."/>
            <person name="Barry K."/>
            <person name="Detter J.C."/>
            <person name="Glavina del Rio T."/>
            <person name="Hammon N."/>
            <person name="Israni S."/>
            <person name="Dalin E."/>
            <person name="Tice H."/>
            <person name="Pitluck S."/>
            <person name="Fredrickson J.K."/>
            <person name="Kolker E."/>
            <person name="McCuel L.A."/>
            <person name="DiChristina T."/>
            <person name="Nealson K.H."/>
            <person name="Newman D."/>
            <person name="Tiedje J.M."/>
            <person name="Zhou J."/>
            <person name="Romine M.F."/>
            <person name="Culley D.E."/>
            <person name="Serres M."/>
            <person name="Chertkov O."/>
            <person name="Brettin T."/>
            <person name="Bruce D."/>
            <person name="Han C."/>
            <person name="Tapia R."/>
            <person name="Gilna P."/>
            <person name="Schmutz J."/>
            <person name="Larimer F."/>
            <person name="Land M."/>
            <person name="Hauser L."/>
            <person name="Kyrpides N."/>
            <person name="Mikhailova N."/>
            <person name="Richardson P."/>
        </authorList>
    </citation>
    <scope>NUCLEOTIDE SEQUENCE [LARGE SCALE GENOMIC DNA]</scope>
    <source>
        <strain>NCIMB 400</strain>
    </source>
</reference>
<sequence length="126" mass="13725">MAIVGIGTDIVEIARISEQRERLGDRLARRVLTEPELATYMQSKQPERFLAKRFAAKEAAAKALGTGIGRGVSFQHIHIDNDANGAPQVRFTDGALARLEQLAGKHGFISIADEKHYAVATVVLES</sequence>
<name>ACPS_SHEFN</name>
<dbReference type="EC" id="2.7.8.7" evidence="1"/>
<dbReference type="EMBL" id="CP000447">
    <property type="protein sequence ID" value="ABI72764.1"/>
    <property type="molecule type" value="Genomic_DNA"/>
</dbReference>
<dbReference type="RefSeq" id="WP_011638373.1">
    <property type="nucleotide sequence ID" value="NC_008345.1"/>
</dbReference>
<dbReference type="SMR" id="Q07Z00"/>
<dbReference type="STRING" id="318167.Sfri_2925"/>
<dbReference type="KEGG" id="sfr:Sfri_2925"/>
<dbReference type="eggNOG" id="COG0736">
    <property type="taxonomic scope" value="Bacteria"/>
</dbReference>
<dbReference type="HOGENOM" id="CLU_089696_3_1_6"/>
<dbReference type="OrthoDB" id="517356at2"/>
<dbReference type="Proteomes" id="UP000000684">
    <property type="component" value="Chromosome"/>
</dbReference>
<dbReference type="GO" id="GO:0005737">
    <property type="term" value="C:cytoplasm"/>
    <property type="evidence" value="ECO:0007669"/>
    <property type="project" value="UniProtKB-SubCell"/>
</dbReference>
<dbReference type="GO" id="GO:0008897">
    <property type="term" value="F:holo-[acyl-carrier-protein] synthase activity"/>
    <property type="evidence" value="ECO:0007669"/>
    <property type="project" value="UniProtKB-UniRule"/>
</dbReference>
<dbReference type="GO" id="GO:0000287">
    <property type="term" value="F:magnesium ion binding"/>
    <property type="evidence" value="ECO:0007669"/>
    <property type="project" value="UniProtKB-UniRule"/>
</dbReference>
<dbReference type="GO" id="GO:0006633">
    <property type="term" value="P:fatty acid biosynthetic process"/>
    <property type="evidence" value="ECO:0007669"/>
    <property type="project" value="UniProtKB-UniRule"/>
</dbReference>
<dbReference type="FunFam" id="3.90.470.20:FF:000001">
    <property type="entry name" value="Holo-[acyl-carrier-protein] synthase"/>
    <property type="match status" value="1"/>
</dbReference>
<dbReference type="Gene3D" id="3.90.470.20">
    <property type="entry name" value="4'-phosphopantetheinyl transferase domain"/>
    <property type="match status" value="1"/>
</dbReference>
<dbReference type="HAMAP" id="MF_00101">
    <property type="entry name" value="AcpS"/>
    <property type="match status" value="1"/>
</dbReference>
<dbReference type="InterPro" id="IPR008278">
    <property type="entry name" value="4-PPantetheinyl_Trfase_dom"/>
</dbReference>
<dbReference type="InterPro" id="IPR037143">
    <property type="entry name" value="4-PPantetheinyl_Trfase_dom_sf"/>
</dbReference>
<dbReference type="InterPro" id="IPR002582">
    <property type="entry name" value="ACPS"/>
</dbReference>
<dbReference type="InterPro" id="IPR004568">
    <property type="entry name" value="Ppantetheine-prot_Trfase_dom"/>
</dbReference>
<dbReference type="NCBIfam" id="TIGR00516">
    <property type="entry name" value="acpS"/>
    <property type="match status" value="1"/>
</dbReference>
<dbReference type="NCBIfam" id="TIGR00556">
    <property type="entry name" value="pantethn_trn"/>
    <property type="match status" value="1"/>
</dbReference>
<dbReference type="Pfam" id="PF01648">
    <property type="entry name" value="ACPS"/>
    <property type="match status" value="1"/>
</dbReference>
<dbReference type="SUPFAM" id="SSF56214">
    <property type="entry name" value="4'-phosphopantetheinyl transferase"/>
    <property type="match status" value="1"/>
</dbReference>
<feature type="chain" id="PRO_1000008493" description="Holo-[acyl-carrier-protein] synthase">
    <location>
        <begin position="1"/>
        <end position="126"/>
    </location>
</feature>
<feature type="binding site" evidence="1">
    <location>
        <position position="9"/>
    </location>
    <ligand>
        <name>Mg(2+)</name>
        <dbReference type="ChEBI" id="CHEBI:18420"/>
    </ligand>
</feature>
<feature type="binding site" evidence="1">
    <location>
        <position position="58"/>
    </location>
    <ligand>
        <name>Mg(2+)</name>
        <dbReference type="ChEBI" id="CHEBI:18420"/>
    </ligand>
</feature>
<keyword id="KW-0963">Cytoplasm</keyword>
<keyword id="KW-0275">Fatty acid biosynthesis</keyword>
<keyword id="KW-0276">Fatty acid metabolism</keyword>
<keyword id="KW-0444">Lipid biosynthesis</keyword>
<keyword id="KW-0443">Lipid metabolism</keyword>
<keyword id="KW-0460">Magnesium</keyword>
<keyword id="KW-0479">Metal-binding</keyword>
<keyword id="KW-1185">Reference proteome</keyword>
<keyword id="KW-0808">Transferase</keyword>
<comment type="function">
    <text evidence="1">Transfers the 4'-phosphopantetheine moiety from coenzyme A to a Ser of acyl-carrier-protein.</text>
</comment>
<comment type="catalytic activity">
    <reaction evidence="1">
        <text>apo-[ACP] + CoA = holo-[ACP] + adenosine 3',5'-bisphosphate + H(+)</text>
        <dbReference type="Rhea" id="RHEA:12068"/>
        <dbReference type="Rhea" id="RHEA-COMP:9685"/>
        <dbReference type="Rhea" id="RHEA-COMP:9690"/>
        <dbReference type="ChEBI" id="CHEBI:15378"/>
        <dbReference type="ChEBI" id="CHEBI:29999"/>
        <dbReference type="ChEBI" id="CHEBI:57287"/>
        <dbReference type="ChEBI" id="CHEBI:58343"/>
        <dbReference type="ChEBI" id="CHEBI:64479"/>
        <dbReference type="EC" id="2.7.8.7"/>
    </reaction>
</comment>
<comment type="cofactor">
    <cofactor evidence="1">
        <name>Mg(2+)</name>
        <dbReference type="ChEBI" id="CHEBI:18420"/>
    </cofactor>
</comment>
<comment type="subcellular location">
    <subcellularLocation>
        <location evidence="1">Cytoplasm</location>
    </subcellularLocation>
</comment>
<comment type="similarity">
    <text evidence="1">Belongs to the P-Pant transferase superfamily. AcpS family.</text>
</comment>
<gene>
    <name evidence="1" type="primary">acpS</name>
    <name type="ordered locus">Sfri_2925</name>
</gene>
<evidence type="ECO:0000255" key="1">
    <source>
        <dbReference type="HAMAP-Rule" id="MF_00101"/>
    </source>
</evidence>
<organism>
    <name type="scientific">Shewanella frigidimarina (strain NCIMB 400)</name>
    <dbReference type="NCBI Taxonomy" id="318167"/>
    <lineage>
        <taxon>Bacteria</taxon>
        <taxon>Pseudomonadati</taxon>
        <taxon>Pseudomonadota</taxon>
        <taxon>Gammaproteobacteria</taxon>
        <taxon>Alteromonadales</taxon>
        <taxon>Shewanellaceae</taxon>
        <taxon>Shewanella</taxon>
    </lineage>
</organism>